<sequence>MLVSGRRRLLTVLLQAQKWPFQPSRDMRLVQFRAPHLVGPHLGLETGNGGGVINLNAFDPTLPKTMTQFLEQGEATLSVARRALAAQLPVLPRSEVTFLAPVTRPDKVVCVGMNYVDHCKEQNVPVPKEPIIFSKFASSIVGPYDEVVLPPQSQEVDWEVELAVVIGKKGKHIKATDAMAHVAGFTVAHDVSARDWQMRRNGKQWLLGKTFDTFCPLGPALVTKDSVADPHNLKICCRVNGEVVQSGNTNQMVFKTEDLIAWVSQFVTFYPGDVILTGTPPGVGVFRKPPVFLKKGDEVQCEIEELGVIINKVV</sequence>
<protein>
    <recommendedName>
        <fullName evidence="6">Oxaloacetate tautomerase FAHD2A, mitochondrial</fullName>
        <ecNumber evidence="4">5.3.2.2</ecNumber>
    </recommendedName>
    <alternativeName>
        <fullName evidence="6">Fumarylacetoacetate hydrolase domain-containing protein 2A</fullName>
    </alternativeName>
</protein>
<name>FAH2A_HUMAN</name>
<evidence type="ECO:0000250" key="1">
    <source>
        <dbReference type="UniProtKB" id="F1MLX0"/>
    </source>
</evidence>
<evidence type="ECO:0000250" key="2">
    <source>
        <dbReference type="UniProtKB" id="Q6P587"/>
    </source>
</evidence>
<evidence type="ECO:0000255" key="3"/>
<evidence type="ECO:0000269" key="4">
    <source>
    </source>
</evidence>
<evidence type="ECO:0000303" key="5">
    <source>
    </source>
</evidence>
<evidence type="ECO:0000305" key="6"/>
<evidence type="ECO:0000312" key="7">
    <source>
        <dbReference type="HGNC" id="HGNC:24252"/>
    </source>
</evidence>
<proteinExistence type="evidence at protein level"/>
<gene>
    <name evidence="5 7" type="primary">FAHD2A</name>
    <name type="ORF">CGI-105</name>
</gene>
<feature type="transit peptide" description="Mitochondrion" evidence="3">
    <location>
        <begin position="1"/>
        <end position="84"/>
    </location>
</feature>
<feature type="chain" id="PRO_0000289795" description="Oxaloacetate tautomerase FAHD2A, mitochondrial" evidence="3">
    <location>
        <begin position="85"/>
        <end position="314"/>
    </location>
</feature>
<feature type="binding site" evidence="2">
    <location>
        <position position="159"/>
    </location>
    <ligand>
        <name>Mg(2+)</name>
        <dbReference type="ChEBI" id="CHEBI:18420"/>
    </ligand>
</feature>
<feature type="binding site" evidence="2">
    <location>
        <position position="161"/>
    </location>
    <ligand>
        <name>Mg(2+)</name>
        <dbReference type="ChEBI" id="CHEBI:18420"/>
    </ligand>
</feature>
<feature type="binding site" evidence="2">
    <location>
        <position position="190"/>
    </location>
    <ligand>
        <name>Mg(2+)</name>
        <dbReference type="ChEBI" id="CHEBI:18420"/>
    </ligand>
</feature>
<feature type="sequence variant" id="VAR_049015" description="In dbSNP:rs1045332.">
    <original>M</original>
    <variation>T</variation>
    <location>
        <position position="198"/>
    </location>
</feature>
<feature type="sequence conflict" description="In Ref. 1; AAD34100." evidence="6" ref="1">
    <original>A</original>
    <variation>G</variation>
    <location>
        <position position="183"/>
    </location>
</feature>
<dbReference type="EC" id="5.3.2.2" evidence="4"/>
<dbReference type="EMBL" id="AF151863">
    <property type="protein sequence ID" value="AAD34100.1"/>
    <property type="molecule type" value="mRNA"/>
</dbReference>
<dbReference type="EMBL" id="AC009238">
    <property type="protein sequence ID" value="AAY14753.1"/>
    <property type="molecule type" value="Genomic_DNA"/>
</dbReference>
<dbReference type="EMBL" id="BC009403">
    <property type="protein sequence ID" value="AAH09403.1"/>
    <property type="molecule type" value="mRNA"/>
</dbReference>
<dbReference type="EMBL" id="BC110911">
    <property type="protein sequence ID" value="AAI10912.1"/>
    <property type="molecule type" value="mRNA"/>
</dbReference>
<dbReference type="CCDS" id="CCDS2014.1"/>
<dbReference type="RefSeq" id="NP_057128.2">
    <property type="nucleotide sequence ID" value="NM_016044.3"/>
</dbReference>
<dbReference type="RefSeq" id="XP_011509591.1">
    <property type="nucleotide sequence ID" value="XM_011511289.2"/>
</dbReference>
<dbReference type="RefSeq" id="XP_016859725.1">
    <property type="nucleotide sequence ID" value="XM_017004236.1"/>
</dbReference>
<dbReference type="RefSeq" id="XP_016859726.1">
    <property type="nucleotide sequence ID" value="XM_017004237.1"/>
</dbReference>
<dbReference type="RefSeq" id="XP_016859727.1">
    <property type="nucleotide sequence ID" value="XM_017004238.1"/>
</dbReference>
<dbReference type="RefSeq" id="XP_016859728.1">
    <property type="nucleotide sequence ID" value="XM_017004239.1"/>
</dbReference>
<dbReference type="RefSeq" id="XP_016859729.1">
    <property type="nucleotide sequence ID" value="XM_017004240.1"/>
</dbReference>
<dbReference type="RefSeq" id="XP_047300576.1">
    <property type="nucleotide sequence ID" value="XM_047444620.1"/>
</dbReference>
<dbReference type="RefSeq" id="XP_054188836.1">
    <property type="nucleotide sequence ID" value="XM_054332861.1"/>
</dbReference>
<dbReference type="RefSeq" id="XP_054188837.1">
    <property type="nucleotide sequence ID" value="XM_054332862.1"/>
</dbReference>
<dbReference type="RefSeq" id="XP_054188838.1">
    <property type="nucleotide sequence ID" value="XM_054332863.1"/>
</dbReference>
<dbReference type="RefSeq" id="XP_054188839.1">
    <property type="nucleotide sequence ID" value="XM_054332864.1"/>
</dbReference>
<dbReference type="RefSeq" id="XP_054188840.1">
    <property type="nucleotide sequence ID" value="XM_054332865.1"/>
</dbReference>
<dbReference type="RefSeq" id="XP_054188841.1">
    <property type="nucleotide sequence ID" value="XM_054332866.1"/>
</dbReference>
<dbReference type="RefSeq" id="XP_054198341.1">
    <property type="nucleotide sequence ID" value="XM_054342366.1"/>
</dbReference>
<dbReference type="SMR" id="Q96GK7"/>
<dbReference type="BioGRID" id="119218">
    <property type="interactions" value="61"/>
</dbReference>
<dbReference type="FunCoup" id="Q96GK7">
    <property type="interactions" value="328"/>
</dbReference>
<dbReference type="IntAct" id="Q96GK7">
    <property type="interactions" value="17"/>
</dbReference>
<dbReference type="STRING" id="9606.ENSP00000233379"/>
<dbReference type="iPTMnet" id="Q96GK7"/>
<dbReference type="PhosphoSitePlus" id="Q96GK7"/>
<dbReference type="BioMuta" id="FAHD2A"/>
<dbReference type="DMDM" id="74731835"/>
<dbReference type="jPOST" id="Q96GK7"/>
<dbReference type="MassIVE" id="Q96GK7"/>
<dbReference type="PaxDb" id="9606-ENSP00000233379"/>
<dbReference type="PeptideAtlas" id="Q96GK7"/>
<dbReference type="ProteomicsDB" id="76640"/>
<dbReference type="Pumba" id="Q96GK7"/>
<dbReference type="Antibodypedia" id="35241">
    <property type="antibodies" value="359 antibodies from 18 providers"/>
</dbReference>
<dbReference type="DNASU" id="51011"/>
<dbReference type="Ensembl" id="ENST00000233379.9">
    <property type="protein sequence ID" value="ENSP00000233379.4"/>
    <property type="gene ID" value="ENSG00000115042.10"/>
</dbReference>
<dbReference type="Ensembl" id="ENST00000447036.5">
    <property type="protein sequence ID" value="ENSP00000406424.1"/>
    <property type="gene ID" value="ENSG00000115042.10"/>
</dbReference>
<dbReference type="Ensembl" id="ENST00000709680.1">
    <property type="protein sequence ID" value="ENSP00000517824.1"/>
    <property type="gene ID" value="ENSG00000292086.1"/>
</dbReference>
<dbReference type="Ensembl" id="ENST00000709682.1">
    <property type="protein sequence ID" value="ENSP00000517826.1"/>
    <property type="gene ID" value="ENSG00000292086.1"/>
</dbReference>
<dbReference type="GeneID" id="51011"/>
<dbReference type="KEGG" id="hsa:51011"/>
<dbReference type="MANE-Select" id="ENST00000233379.9">
    <property type="protein sequence ID" value="ENSP00000233379.4"/>
    <property type="RefSeq nucleotide sequence ID" value="NM_016044.3"/>
    <property type="RefSeq protein sequence ID" value="NP_057128.2"/>
</dbReference>
<dbReference type="UCSC" id="uc002sut.2">
    <property type="organism name" value="human"/>
</dbReference>
<dbReference type="AGR" id="HGNC:24252"/>
<dbReference type="CTD" id="51011"/>
<dbReference type="DisGeNET" id="51011"/>
<dbReference type="GeneCards" id="FAHD2A"/>
<dbReference type="HGNC" id="HGNC:24252">
    <property type="gene designation" value="FAHD2A"/>
</dbReference>
<dbReference type="HPA" id="ENSG00000115042">
    <property type="expression patterns" value="Tissue enhanced (liver)"/>
</dbReference>
<dbReference type="neXtProt" id="NX_Q96GK7"/>
<dbReference type="OpenTargets" id="ENSG00000115042"/>
<dbReference type="PharmGKB" id="PA134860971"/>
<dbReference type="VEuPathDB" id="HostDB:ENSG00000115042"/>
<dbReference type="eggNOG" id="KOG1535">
    <property type="taxonomic scope" value="Eukaryota"/>
</dbReference>
<dbReference type="GeneTree" id="ENSGT00940000160571"/>
<dbReference type="HOGENOM" id="CLU_028458_3_2_1"/>
<dbReference type="InParanoid" id="Q96GK7"/>
<dbReference type="OMA" id="CNKIVAP"/>
<dbReference type="OrthoDB" id="411064at2759"/>
<dbReference type="PAN-GO" id="Q96GK7">
    <property type="GO annotations" value="1 GO annotation based on evolutionary models"/>
</dbReference>
<dbReference type="PhylomeDB" id="Q96GK7"/>
<dbReference type="TreeFam" id="TF300911"/>
<dbReference type="PathwayCommons" id="Q96GK7"/>
<dbReference type="SignaLink" id="Q96GK7"/>
<dbReference type="BioGRID-ORCS" id="51011">
    <property type="hits" value="27 hits in 1061 CRISPR screens"/>
</dbReference>
<dbReference type="ChiTaRS" id="FAHD2A">
    <property type="organism name" value="human"/>
</dbReference>
<dbReference type="GenomeRNAi" id="51011"/>
<dbReference type="Pharos" id="Q96GK7">
    <property type="development level" value="Tdark"/>
</dbReference>
<dbReference type="PRO" id="PR:Q96GK7"/>
<dbReference type="Proteomes" id="UP000005640">
    <property type="component" value="Chromosome 2"/>
</dbReference>
<dbReference type="RNAct" id="Q96GK7">
    <property type="molecule type" value="protein"/>
</dbReference>
<dbReference type="Bgee" id="ENSG00000115042">
    <property type="expression patterns" value="Expressed in right lobe of liver and 170 other cell types or tissues"/>
</dbReference>
<dbReference type="ExpressionAtlas" id="Q96GK7">
    <property type="expression patterns" value="baseline and differential"/>
</dbReference>
<dbReference type="GO" id="GO:0005739">
    <property type="term" value="C:mitochondrion"/>
    <property type="evidence" value="ECO:0006056"/>
    <property type="project" value="FlyBase"/>
</dbReference>
<dbReference type="GO" id="GO:0046872">
    <property type="term" value="F:metal ion binding"/>
    <property type="evidence" value="ECO:0007669"/>
    <property type="project" value="UniProtKB-KW"/>
</dbReference>
<dbReference type="GO" id="GO:0050163">
    <property type="term" value="F:oxaloacetate tautomerase activity"/>
    <property type="evidence" value="ECO:0000314"/>
    <property type="project" value="UniProtKB"/>
</dbReference>
<dbReference type="GO" id="GO:0006107">
    <property type="term" value="P:oxaloacetate metabolic process"/>
    <property type="evidence" value="ECO:0000314"/>
    <property type="project" value="UniProtKB"/>
</dbReference>
<dbReference type="FunFam" id="3.90.850.10:FF:000002">
    <property type="entry name" value="2-hydroxyhepta-2,4-diene-1,7-dioate isomerase"/>
    <property type="match status" value="1"/>
</dbReference>
<dbReference type="Gene3D" id="3.90.850.10">
    <property type="entry name" value="Fumarylacetoacetase-like, C-terminal domain"/>
    <property type="match status" value="1"/>
</dbReference>
<dbReference type="InterPro" id="IPR051121">
    <property type="entry name" value="FAH"/>
</dbReference>
<dbReference type="InterPro" id="IPR011234">
    <property type="entry name" value="Fumarylacetoacetase-like_C"/>
</dbReference>
<dbReference type="InterPro" id="IPR036663">
    <property type="entry name" value="Fumarylacetoacetase_C_sf"/>
</dbReference>
<dbReference type="PANTHER" id="PTHR42796">
    <property type="entry name" value="FUMARYLACETOACETATE HYDROLASE DOMAIN-CONTAINING PROTEIN 2A-RELATED"/>
    <property type="match status" value="1"/>
</dbReference>
<dbReference type="PANTHER" id="PTHR42796:SF3">
    <property type="entry name" value="FUMARYLACETOACETATE HYDROLASE DOMAIN-CONTAINING PROTEIN 2A-RELATED"/>
    <property type="match status" value="1"/>
</dbReference>
<dbReference type="Pfam" id="PF01557">
    <property type="entry name" value="FAA_hydrolase"/>
    <property type="match status" value="1"/>
</dbReference>
<dbReference type="SUPFAM" id="SSF56529">
    <property type="entry name" value="FAH"/>
    <property type="match status" value="1"/>
</dbReference>
<comment type="function">
    <text evidence="4">Tautomerase that converts enol-oxaloacetate, a strong inhibitor of succinate dehydrogenase, to the physiological keto form of oxaloacetate (PubMed:38287013). It is thereby required to maximize aerobic respiration efficiency by preventing succinate dehydrogenase inhibition (PubMed:38287013).</text>
</comment>
<comment type="catalytic activity">
    <reaction evidence="4">
        <text>oxaloacetate = enol-oxaloacetate</text>
        <dbReference type="Rhea" id="RHEA:16021"/>
        <dbReference type="ChEBI" id="CHEBI:16452"/>
        <dbReference type="ChEBI" id="CHEBI:17479"/>
        <dbReference type="EC" id="5.3.2.2"/>
    </reaction>
    <physiologicalReaction direction="right-to-left" evidence="1">
        <dbReference type="Rhea" id="RHEA:16023"/>
    </physiologicalReaction>
</comment>
<comment type="cofactor">
    <cofactor evidence="2">
        <name>Mg(2+)</name>
        <dbReference type="ChEBI" id="CHEBI:18420"/>
    </cofactor>
    <cofactor evidence="2">
        <name>Mn(2+)</name>
        <dbReference type="ChEBI" id="CHEBI:29035"/>
    </cofactor>
    <text evidence="2">Requires a divalent metal cation for activity.</text>
</comment>
<comment type="biophysicochemical properties">
    <kinetics>
        <KM evidence="4">22.2 uM for enol-oxaloacetate</KM>
        <Vmax evidence="4">22.2 umol/min/mg enzyme</Vmax>
        <text evidence="4">kcat is 13.6 sec(-1) with enol-oxaloacetate as substrate.</text>
    </kinetics>
</comment>
<comment type="interaction">
    <interactant intactId="EBI-21647872">
        <id>Q96GK7</id>
    </interactant>
    <interactant intactId="EBI-1049597">
        <id>P27797</id>
        <label>CALR</label>
    </interactant>
    <organismsDiffer>false</organismsDiffer>
    <experiments>3</experiments>
</comment>
<comment type="interaction">
    <interactant intactId="EBI-21647872">
        <id>Q96GK7</id>
    </interactant>
    <interactant intactId="EBI-351007">
        <id>P36957</id>
        <label>DLST</label>
    </interactant>
    <organismsDiffer>false</organismsDiffer>
    <experiments>3</experiments>
</comment>
<comment type="interaction">
    <interactant intactId="EBI-21647872">
        <id>Q96GK7</id>
    </interactant>
    <interactant intactId="EBI-1055945">
        <id>Q8TDX7</id>
        <label>NEK7</label>
    </interactant>
    <organismsDiffer>false</organismsDiffer>
    <experiments>3</experiments>
</comment>
<comment type="subcellular location">
    <subcellularLocation>
        <location evidence="1">Mitochondrion</location>
    </subcellularLocation>
</comment>
<comment type="similarity">
    <text evidence="6">Belongs to the FAH family.</text>
</comment>
<reference key="1">
    <citation type="journal article" date="2000" name="Genome Res.">
        <title>Identification of novel human genes evolutionarily conserved in Caenorhabditis elegans by comparative proteomics.</title>
        <authorList>
            <person name="Lai C.-H."/>
            <person name="Chou C.-Y."/>
            <person name="Ch'ang L.-Y."/>
            <person name="Liu C.-S."/>
            <person name="Lin W.-C."/>
        </authorList>
    </citation>
    <scope>NUCLEOTIDE SEQUENCE [LARGE SCALE MRNA]</scope>
</reference>
<reference key="2">
    <citation type="journal article" date="2005" name="Nature">
        <title>Generation and annotation of the DNA sequences of human chromosomes 2 and 4.</title>
        <authorList>
            <person name="Hillier L.W."/>
            <person name="Graves T.A."/>
            <person name="Fulton R.S."/>
            <person name="Fulton L.A."/>
            <person name="Pepin K.H."/>
            <person name="Minx P."/>
            <person name="Wagner-McPherson C."/>
            <person name="Layman D."/>
            <person name="Wylie K."/>
            <person name="Sekhon M."/>
            <person name="Becker M.C."/>
            <person name="Fewell G.A."/>
            <person name="Delehaunty K.D."/>
            <person name="Miner T.L."/>
            <person name="Nash W.E."/>
            <person name="Kremitzki C."/>
            <person name="Oddy L."/>
            <person name="Du H."/>
            <person name="Sun H."/>
            <person name="Bradshaw-Cordum H."/>
            <person name="Ali J."/>
            <person name="Carter J."/>
            <person name="Cordes M."/>
            <person name="Harris A."/>
            <person name="Isak A."/>
            <person name="van Brunt A."/>
            <person name="Nguyen C."/>
            <person name="Du F."/>
            <person name="Courtney L."/>
            <person name="Kalicki J."/>
            <person name="Ozersky P."/>
            <person name="Abbott S."/>
            <person name="Armstrong J."/>
            <person name="Belter E.A."/>
            <person name="Caruso L."/>
            <person name="Cedroni M."/>
            <person name="Cotton M."/>
            <person name="Davidson T."/>
            <person name="Desai A."/>
            <person name="Elliott G."/>
            <person name="Erb T."/>
            <person name="Fronick C."/>
            <person name="Gaige T."/>
            <person name="Haakenson W."/>
            <person name="Haglund K."/>
            <person name="Holmes A."/>
            <person name="Harkins R."/>
            <person name="Kim K."/>
            <person name="Kruchowski S.S."/>
            <person name="Strong C.M."/>
            <person name="Grewal N."/>
            <person name="Goyea E."/>
            <person name="Hou S."/>
            <person name="Levy A."/>
            <person name="Martinka S."/>
            <person name="Mead K."/>
            <person name="McLellan M.D."/>
            <person name="Meyer R."/>
            <person name="Randall-Maher J."/>
            <person name="Tomlinson C."/>
            <person name="Dauphin-Kohlberg S."/>
            <person name="Kozlowicz-Reilly A."/>
            <person name="Shah N."/>
            <person name="Swearengen-Shahid S."/>
            <person name="Snider J."/>
            <person name="Strong J.T."/>
            <person name="Thompson J."/>
            <person name="Yoakum M."/>
            <person name="Leonard S."/>
            <person name="Pearman C."/>
            <person name="Trani L."/>
            <person name="Radionenko M."/>
            <person name="Waligorski J.E."/>
            <person name="Wang C."/>
            <person name="Rock S.M."/>
            <person name="Tin-Wollam A.-M."/>
            <person name="Maupin R."/>
            <person name="Latreille P."/>
            <person name="Wendl M.C."/>
            <person name="Yang S.-P."/>
            <person name="Pohl C."/>
            <person name="Wallis J.W."/>
            <person name="Spieth J."/>
            <person name="Bieri T.A."/>
            <person name="Berkowicz N."/>
            <person name="Nelson J.O."/>
            <person name="Osborne J."/>
            <person name="Ding L."/>
            <person name="Meyer R."/>
            <person name="Sabo A."/>
            <person name="Shotland Y."/>
            <person name="Sinha P."/>
            <person name="Wohldmann P.E."/>
            <person name="Cook L.L."/>
            <person name="Hickenbotham M.T."/>
            <person name="Eldred J."/>
            <person name="Williams D."/>
            <person name="Jones T.A."/>
            <person name="She X."/>
            <person name="Ciccarelli F.D."/>
            <person name="Izaurralde E."/>
            <person name="Taylor J."/>
            <person name="Schmutz J."/>
            <person name="Myers R.M."/>
            <person name="Cox D.R."/>
            <person name="Huang X."/>
            <person name="McPherson J.D."/>
            <person name="Mardis E.R."/>
            <person name="Clifton S.W."/>
            <person name="Warren W.C."/>
            <person name="Chinwalla A.T."/>
            <person name="Eddy S.R."/>
            <person name="Marra M.A."/>
            <person name="Ovcharenko I."/>
            <person name="Furey T.S."/>
            <person name="Miller W."/>
            <person name="Eichler E.E."/>
            <person name="Bork P."/>
            <person name="Suyama M."/>
            <person name="Torrents D."/>
            <person name="Waterston R.H."/>
            <person name="Wilson R.K."/>
        </authorList>
    </citation>
    <scope>NUCLEOTIDE SEQUENCE [LARGE SCALE GENOMIC DNA]</scope>
</reference>
<reference key="3">
    <citation type="journal article" date="2004" name="Genome Res.">
        <title>The status, quality, and expansion of the NIH full-length cDNA project: the Mammalian Gene Collection (MGC).</title>
        <authorList>
            <consortium name="The MGC Project Team"/>
        </authorList>
    </citation>
    <scope>NUCLEOTIDE SEQUENCE [LARGE SCALE MRNA]</scope>
    <source>
        <tissue>B-cell</tissue>
        <tissue>Skin</tissue>
    </source>
</reference>
<reference key="4">
    <citation type="journal article" date="2011" name="BMC Syst. Biol.">
        <title>Initial characterization of the human central proteome.</title>
        <authorList>
            <person name="Burkard T.R."/>
            <person name="Planyavsky M."/>
            <person name="Kaupe I."/>
            <person name="Breitwieser F.P."/>
            <person name="Buerckstuemmer T."/>
            <person name="Bennett K.L."/>
            <person name="Superti-Furga G."/>
            <person name="Colinge J."/>
        </authorList>
    </citation>
    <scope>IDENTIFICATION BY MASS SPECTROMETRY [LARGE SCALE ANALYSIS]</scope>
</reference>
<reference key="5">
    <citation type="journal article" date="2015" name="Proteomics">
        <title>N-terminome analysis of the human mitochondrial proteome.</title>
        <authorList>
            <person name="Vaca Jacome A.S."/>
            <person name="Rabilloud T."/>
            <person name="Schaeffer-Reiss C."/>
            <person name="Rompais M."/>
            <person name="Ayoub D."/>
            <person name="Lane L."/>
            <person name="Bairoch A."/>
            <person name="Van Dorsselaer A."/>
            <person name="Carapito C."/>
        </authorList>
    </citation>
    <scope>IDENTIFICATION BY MASS SPECTROMETRY [LARGE SCALE ANALYSIS]</scope>
</reference>
<reference key="6">
    <citation type="journal article" date="2024" name="Nat. Commun.">
        <title>A universal metabolite repair enzyme removes a strong inhibitor of the TCA cycle.</title>
        <authorList>
            <person name="Zmuda A.J."/>
            <person name="Kang X."/>
            <person name="Wissbroecker K.B."/>
            <person name="Freund Saxhaug K."/>
            <person name="Costa K.C."/>
            <person name="Hegeman A.D."/>
            <person name="Niehaus T.D."/>
        </authorList>
    </citation>
    <scope>FUNCTION</scope>
    <scope>CATALYTIC ACTIVITY</scope>
    <scope>BIOPHYSICOCHEMICAL PROPERTIES</scope>
</reference>
<keyword id="KW-0413">Isomerase</keyword>
<keyword id="KW-0460">Magnesium</keyword>
<keyword id="KW-0479">Metal-binding</keyword>
<keyword id="KW-0496">Mitochondrion</keyword>
<keyword id="KW-1267">Proteomics identification</keyword>
<keyword id="KW-1185">Reference proteome</keyword>
<keyword id="KW-0809">Transit peptide</keyword>
<accession>Q96GK7</accession>
<accession>Q9Y3B0</accession>
<organism>
    <name type="scientific">Homo sapiens</name>
    <name type="common">Human</name>
    <dbReference type="NCBI Taxonomy" id="9606"/>
    <lineage>
        <taxon>Eukaryota</taxon>
        <taxon>Metazoa</taxon>
        <taxon>Chordata</taxon>
        <taxon>Craniata</taxon>
        <taxon>Vertebrata</taxon>
        <taxon>Euteleostomi</taxon>
        <taxon>Mammalia</taxon>
        <taxon>Eutheria</taxon>
        <taxon>Euarchontoglires</taxon>
        <taxon>Primates</taxon>
        <taxon>Haplorrhini</taxon>
        <taxon>Catarrhini</taxon>
        <taxon>Hominidae</taxon>
        <taxon>Homo</taxon>
    </lineage>
</organism>